<protein>
    <recommendedName>
        <fullName evidence="1">Aspartyl/glutamyl-tRNA(Asn/Gln) amidotransferase subunit C</fullName>
        <shortName evidence="1">Asp/Glu-ADT subunit C</shortName>
        <ecNumber evidence="1">6.3.5.-</ecNumber>
    </recommendedName>
</protein>
<reference key="1">
    <citation type="journal article" date="2008" name="Environ. Microbiol.">
        <title>The complete genome sequence of Moorella thermoacetica (f. Clostridium thermoaceticum).</title>
        <authorList>
            <person name="Pierce E."/>
            <person name="Xie G."/>
            <person name="Barabote R.D."/>
            <person name="Saunders E."/>
            <person name="Han C.S."/>
            <person name="Detter J.C."/>
            <person name="Richardson P."/>
            <person name="Brettin T.S."/>
            <person name="Das A."/>
            <person name="Ljungdahl L.G."/>
            <person name="Ragsdale S.W."/>
        </authorList>
    </citation>
    <scope>NUCLEOTIDE SEQUENCE [LARGE SCALE GENOMIC DNA]</scope>
    <source>
        <strain>ATCC 39073 / JCM 9320</strain>
    </source>
</reference>
<sequence>MPISTAEVEHVALLARLKLSPEEKTAYTEQLNAILEYMDKLNALDTRDVEPTAHVLPLRNVFRDDCARPGLPREKALQGAPEVSEGQFKVPRVV</sequence>
<comment type="function">
    <text evidence="1">Allows the formation of correctly charged Asn-tRNA(Asn) or Gln-tRNA(Gln) through the transamidation of misacylated Asp-tRNA(Asn) or Glu-tRNA(Gln) in organisms which lack either or both of asparaginyl-tRNA or glutaminyl-tRNA synthetases. The reaction takes place in the presence of glutamine and ATP through an activated phospho-Asp-tRNA(Asn) or phospho-Glu-tRNA(Gln).</text>
</comment>
<comment type="catalytic activity">
    <reaction evidence="1">
        <text>L-glutamyl-tRNA(Gln) + L-glutamine + ATP + H2O = L-glutaminyl-tRNA(Gln) + L-glutamate + ADP + phosphate + H(+)</text>
        <dbReference type="Rhea" id="RHEA:17521"/>
        <dbReference type="Rhea" id="RHEA-COMP:9681"/>
        <dbReference type="Rhea" id="RHEA-COMP:9684"/>
        <dbReference type="ChEBI" id="CHEBI:15377"/>
        <dbReference type="ChEBI" id="CHEBI:15378"/>
        <dbReference type="ChEBI" id="CHEBI:29985"/>
        <dbReference type="ChEBI" id="CHEBI:30616"/>
        <dbReference type="ChEBI" id="CHEBI:43474"/>
        <dbReference type="ChEBI" id="CHEBI:58359"/>
        <dbReference type="ChEBI" id="CHEBI:78520"/>
        <dbReference type="ChEBI" id="CHEBI:78521"/>
        <dbReference type="ChEBI" id="CHEBI:456216"/>
    </reaction>
</comment>
<comment type="catalytic activity">
    <reaction evidence="1">
        <text>L-aspartyl-tRNA(Asn) + L-glutamine + ATP + H2O = L-asparaginyl-tRNA(Asn) + L-glutamate + ADP + phosphate + 2 H(+)</text>
        <dbReference type="Rhea" id="RHEA:14513"/>
        <dbReference type="Rhea" id="RHEA-COMP:9674"/>
        <dbReference type="Rhea" id="RHEA-COMP:9677"/>
        <dbReference type="ChEBI" id="CHEBI:15377"/>
        <dbReference type="ChEBI" id="CHEBI:15378"/>
        <dbReference type="ChEBI" id="CHEBI:29985"/>
        <dbReference type="ChEBI" id="CHEBI:30616"/>
        <dbReference type="ChEBI" id="CHEBI:43474"/>
        <dbReference type="ChEBI" id="CHEBI:58359"/>
        <dbReference type="ChEBI" id="CHEBI:78515"/>
        <dbReference type="ChEBI" id="CHEBI:78516"/>
        <dbReference type="ChEBI" id="CHEBI:456216"/>
    </reaction>
</comment>
<comment type="subunit">
    <text evidence="1">Heterotrimer of A, B and C subunits.</text>
</comment>
<comment type="similarity">
    <text evidence="1">Belongs to the GatC family.</text>
</comment>
<keyword id="KW-0067">ATP-binding</keyword>
<keyword id="KW-0436">Ligase</keyword>
<keyword id="KW-0547">Nucleotide-binding</keyword>
<keyword id="KW-0648">Protein biosynthesis</keyword>
<gene>
    <name evidence="1" type="primary">gatC</name>
    <name type="ordered locus">Moth_2010</name>
</gene>
<feature type="chain" id="PRO_1000016148" description="Aspartyl/glutamyl-tRNA(Asn/Gln) amidotransferase subunit C">
    <location>
        <begin position="1"/>
        <end position="94"/>
    </location>
</feature>
<feature type="region of interest" description="Disordered" evidence="2">
    <location>
        <begin position="72"/>
        <end position="94"/>
    </location>
</feature>
<organism>
    <name type="scientific">Moorella thermoacetica (strain ATCC 39073 / JCM 9320)</name>
    <dbReference type="NCBI Taxonomy" id="264732"/>
    <lineage>
        <taxon>Bacteria</taxon>
        <taxon>Bacillati</taxon>
        <taxon>Bacillota</taxon>
        <taxon>Clostridia</taxon>
        <taxon>Moorellales</taxon>
        <taxon>Moorellaceae</taxon>
        <taxon>Moorella</taxon>
    </lineage>
</organism>
<evidence type="ECO:0000255" key="1">
    <source>
        <dbReference type="HAMAP-Rule" id="MF_00122"/>
    </source>
</evidence>
<evidence type="ECO:0000256" key="2">
    <source>
        <dbReference type="SAM" id="MobiDB-lite"/>
    </source>
</evidence>
<name>GATC_MOOTA</name>
<proteinExistence type="inferred from homology"/>
<accession>Q2RGY3</accession>
<dbReference type="EC" id="6.3.5.-" evidence="1"/>
<dbReference type="EMBL" id="CP000232">
    <property type="protein sequence ID" value="ABC20306.1"/>
    <property type="molecule type" value="Genomic_DNA"/>
</dbReference>
<dbReference type="RefSeq" id="YP_430849.1">
    <property type="nucleotide sequence ID" value="NC_007644.1"/>
</dbReference>
<dbReference type="SMR" id="Q2RGY3"/>
<dbReference type="STRING" id="264732.Moth_2010"/>
<dbReference type="EnsemblBacteria" id="ABC20306">
    <property type="protein sequence ID" value="ABC20306"/>
    <property type="gene ID" value="Moth_2010"/>
</dbReference>
<dbReference type="KEGG" id="mta:Moth_2010"/>
<dbReference type="PATRIC" id="fig|264732.11.peg.2179"/>
<dbReference type="eggNOG" id="COG0721">
    <property type="taxonomic scope" value="Bacteria"/>
</dbReference>
<dbReference type="HOGENOM" id="CLU_105899_1_2_9"/>
<dbReference type="OrthoDB" id="9813938at2"/>
<dbReference type="GO" id="GO:0050566">
    <property type="term" value="F:asparaginyl-tRNA synthase (glutamine-hydrolyzing) activity"/>
    <property type="evidence" value="ECO:0007669"/>
    <property type="project" value="RHEA"/>
</dbReference>
<dbReference type="GO" id="GO:0005524">
    <property type="term" value="F:ATP binding"/>
    <property type="evidence" value="ECO:0007669"/>
    <property type="project" value="UniProtKB-KW"/>
</dbReference>
<dbReference type="GO" id="GO:0050567">
    <property type="term" value="F:glutaminyl-tRNA synthase (glutamine-hydrolyzing) activity"/>
    <property type="evidence" value="ECO:0007669"/>
    <property type="project" value="UniProtKB-UniRule"/>
</dbReference>
<dbReference type="GO" id="GO:0070681">
    <property type="term" value="P:glutaminyl-tRNAGln biosynthesis via transamidation"/>
    <property type="evidence" value="ECO:0007669"/>
    <property type="project" value="TreeGrafter"/>
</dbReference>
<dbReference type="GO" id="GO:0006450">
    <property type="term" value="P:regulation of translational fidelity"/>
    <property type="evidence" value="ECO:0007669"/>
    <property type="project" value="InterPro"/>
</dbReference>
<dbReference type="GO" id="GO:0006412">
    <property type="term" value="P:translation"/>
    <property type="evidence" value="ECO:0007669"/>
    <property type="project" value="UniProtKB-UniRule"/>
</dbReference>
<dbReference type="Gene3D" id="1.10.20.60">
    <property type="entry name" value="Glu-tRNAGln amidotransferase C subunit, N-terminal domain"/>
    <property type="match status" value="1"/>
</dbReference>
<dbReference type="HAMAP" id="MF_00122">
    <property type="entry name" value="GatC"/>
    <property type="match status" value="1"/>
</dbReference>
<dbReference type="InterPro" id="IPR036113">
    <property type="entry name" value="Asp/Glu-ADT_sf_sub_c"/>
</dbReference>
<dbReference type="InterPro" id="IPR003837">
    <property type="entry name" value="GatC"/>
</dbReference>
<dbReference type="NCBIfam" id="TIGR00135">
    <property type="entry name" value="gatC"/>
    <property type="match status" value="1"/>
</dbReference>
<dbReference type="PANTHER" id="PTHR15004">
    <property type="entry name" value="GLUTAMYL-TRNA(GLN) AMIDOTRANSFERASE SUBUNIT C, MITOCHONDRIAL"/>
    <property type="match status" value="1"/>
</dbReference>
<dbReference type="PANTHER" id="PTHR15004:SF0">
    <property type="entry name" value="GLUTAMYL-TRNA(GLN) AMIDOTRANSFERASE SUBUNIT C, MITOCHONDRIAL"/>
    <property type="match status" value="1"/>
</dbReference>
<dbReference type="Pfam" id="PF02686">
    <property type="entry name" value="GatC"/>
    <property type="match status" value="1"/>
</dbReference>
<dbReference type="SUPFAM" id="SSF141000">
    <property type="entry name" value="Glu-tRNAGln amidotransferase C subunit"/>
    <property type="match status" value="1"/>
</dbReference>